<name>PUR9_LISMF</name>
<reference key="1">
    <citation type="journal article" date="2004" name="Nucleic Acids Res.">
        <title>Whole genome comparisons of serotype 4b and 1/2a strains of the food-borne pathogen Listeria monocytogenes reveal new insights into the core genome components of this species.</title>
        <authorList>
            <person name="Nelson K.E."/>
            <person name="Fouts D.E."/>
            <person name="Mongodin E.F."/>
            <person name="Ravel J."/>
            <person name="DeBoy R.T."/>
            <person name="Kolonay J.F."/>
            <person name="Rasko D.A."/>
            <person name="Angiuoli S.V."/>
            <person name="Gill S.R."/>
            <person name="Paulsen I.T."/>
            <person name="Peterson J.D."/>
            <person name="White O."/>
            <person name="Nelson W.C."/>
            <person name="Nierman W.C."/>
            <person name="Beanan M.J."/>
            <person name="Brinkac L.M."/>
            <person name="Daugherty S.C."/>
            <person name="Dodson R.J."/>
            <person name="Durkin A.S."/>
            <person name="Madupu R."/>
            <person name="Haft D.H."/>
            <person name="Selengut J."/>
            <person name="Van Aken S.E."/>
            <person name="Khouri H.M."/>
            <person name="Fedorova N."/>
            <person name="Forberger H.A."/>
            <person name="Tran B."/>
            <person name="Kathariou S."/>
            <person name="Wonderling L.D."/>
            <person name="Uhlich G.A."/>
            <person name="Bayles D.O."/>
            <person name="Luchansky J.B."/>
            <person name="Fraser C.M."/>
        </authorList>
    </citation>
    <scope>NUCLEOTIDE SEQUENCE [LARGE SCALE GENOMIC DNA]</scope>
    <source>
        <strain>F2365</strain>
    </source>
</reference>
<organism>
    <name type="scientific">Listeria monocytogenes serotype 4b (strain F2365)</name>
    <dbReference type="NCBI Taxonomy" id="265669"/>
    <lineage>
        <taxon>Bacteria</taxon>
        <taxon>Bacillati</taxon>
        <taxon>Bacillota</taxon>
        <taxon>Bacilli</taxon>
        <taxon>Bacillales</taxon>
        <taxon>Listeriaceae</taxon>
        <taxon>Listeria</taxon>
    </lineage>
</organism>
<proteinExistence type="inferred from homology"/>
<gene>
    <name evidence="1" type="primary">purH</name>
    <name type="ordered locus">LMOf2365_1790</name>
</gene>
<feature type="chain" id="PRO_0000192102" description="Bifunctional purine biosynthesis protein PurH">
    <location>
        <begin position="1"/>
        <end position="509"/>
    </location>
</feature>
<feature type="domain" description="MGS-like" evidence="2">
    <location>
        <begin position="1"/>
        <end position="144"/>
    </location>
</feature>
<accession>Q71YQ3</accession>
<dbReference type="EC" id="2.1.2.3" evidence="1"/>
<dbReference type="EC" id="3.5.4.10" evidence="1"/>
<dbReference type="EMBL" id="AE017262">
    <property type="protein sequence ID" value="AAT04561.1"/>
    <property type="molecule type" value="Genomic_DNA"/>
</dbReference>
<dbReference type="RefSeq" id="WP_003726208.1">
    <property type="nucleotide sequence ID" value="NC_002973.6"/>
</dbReference>
<dbReference type="SMR" id="Q71YQ3"/>
<dbReference type="KEGG" id="lmf:LMOf2365_1790"/>
<dbReference type="HOGENOM" id="CLU_016316_5_2_9"/>
<dbReference type="UniPathway" id="UPA00074">
    <property type="reaction ID" value="UER00133"/>
</dbReference>
<dbReference type="UniPathway" id="UPA00074">
    <property type="reaction ID" value="UER00135"/>
</dbReference>
<dbReference type="GO" id="GO:0005829">
    <property type="term" value="C:cytosol"/>
    <property type="evidence" value="ECO:0007669"/>
    <property type="project" value="TreeGrafter"/>
</dbReference>
<dbReference type="GO" id="GO:0003937">
    <property type="term" value="F:IMP cyclohydrolase activity"/>
    <property type="evidence" value="ECO:0007669"/>
    <property type="project" value="UniProtKB-UniRule"/>
</dbReference>
<dbReference type="GO" id="GO:0004643">
    <property type="term" value="F:phosphoribosylaminoimidazolecarboxamide formyltransferase activity"/>
    <property type="evidence" value="ECO:0007669"/>
    <property type="project" value="UniProtKB-UniRule"/>
</dbReference>
<dbReference type="GO" id="GO:0006189">
    <property type="term" value="P:'de novo' IMP biosynthetic process"/>
    <property type="evidence" value="ECO:0007669"/>
    <property type="project" value="UniProtKB-UniRule"/>
</dbReference>
<dbReference type="CDD" id="cd01421">
    <property type="entry name" value="IMPCH"/>
    <property type="match status" value="1"/>
</dbReference>
<dbReference type="FunFam" id="3.40.140.20:FF:000001">
    <property type="entry name" value="Bifunctional purine biosynthesis protein PurH"/>
    <property type="match status" value="1"/>
</dbReference>
<dbReference type="FunFam" id="3.40.140.20:FF:000002">
    <property type="entry name" value="Bifunctional purine biosynthesis protein PurH"/>
    <property type="match status" value="1"/>
</dbReference>
<dbReference type="FunFam" id="3.40.50.1380:FF:000001">
    <property type="entry name" value="Bifunctional purine biosynthesis protein PurH"/>
    <property type="match status" value="1"/>
</dbReference>
<dbReference type="Gene3D" id="3.40.140.20">
    <property type="match status" value="2"/>
</dbReference>
<dbReference type="Gene3D" id="3.40.50.1380">
    <property type="entry name" value="Methylglyoxal synthase-like domain"/>
    <property type="match status" value="1"/>
</dbReference>
<dbReference type="HAMAP" id="MF_00139">
    <property type="entry name" value="PurH"/>
    <property type="match status" value="1"/>
</dbReference>
<dbReference type="InterPro" id="IPR024051">
    <property type="entry name" value="AICAR_Tfase_dup_dom_sf"/>
</dbReference>
<dbReference type="InterPro" id="IPR016193">
    <property type="entry name" value="Cytidine_deaminase-like"/>
</dbReference>
<dbReference type="InterPro" id="IPR011607">
    <property type="entry name" value="MGS-like_dom"/>
</dbReference>
<dbReference type="InterPro" id="IPR036914">
    <property type="entry name" value="MGS-like_dom_sf"/>
</dbReference>
<dbReference type="InterPro" id="IPR002695">
    <property type="entry name" value="PurH-like"/>
</dbReference>
<dbReference type="NCBIfam" id="NF002049">
    <property type="entry name" value="PRK00881.1"/>
    <property type="match status" value="1"/>
</dbReference>
<dbReference type="NCBIfam" id="TIGR00355">
    <property type="entry name" value="purH"/>
    <property type="match status" value="1"/>
</dbReference>
<dbReference type="PANTHER" id="PTHR11692:SF0">
    <property type="entry name" value="BIFUNCTIONAL PURINE BIOSYNTHESIS PROTEIN ATIC"/>
    <property type="match status" value="1"/>
</dbReference>
<dbReference type="PANTHER" id="PTHR11692">
    <property type="entry name" value="BIFUNCTIONAL PURINE BIOSYNTHESIS PROTEIN PURH"/>
    <property type="match status" value="1"/>
</dbReference>
<dbReference type="Pfam" id="PF01808">
    <property type="entry name" value="AICARFT_IMPCHas"/>
    <property type="match status" value="1"/>
</dbReference>
<dbReference type="Pfam" id="PF02142">
    <property type="entry name" value="MGS"/>
    <property type="match status" value="1"/>
</dbReference>
<dbReference type="PIRSF" id="PIRSF000414">
    <property type="entry name" value="AICARFT_IMPCHas"/>
    <property type="match status" value="1"/>
</dbReference>
<dbReference type="SMART" id="SM00798">
    <property type="entry name" value="AICARFT_IMPCHas"/>
    <property type="match status" value="1"/>
</dbReference>
<dbReference type="SMART" id="SM00851">
    <property type="entry name" value="MGS"/>
    <property type="match status" value="1"/>
</dbReference>
<dbReference type="SUPFAM" id="SSF53927">
    <property type="entry name" value="Cytidine deaminase-like"/>
    <property type="match status" value="1"/>
</dbReference>
<dbReference type="SUPFAM" id="SSF52335">
    <property type="entry name" value="Methylglyoxal synthase-like"/>
    <property type="match status" value="1"/>
</dbReference>
<dbReference type="PROSITE" id="PS51855">
    <property type="entry name" value="MGS"/>
    <property type="match status" value="1"/>
</dbReference>
<keyword id="KW-0378">Hydrolase</keyword>
<keyword id="KW-0511">Multifunctional enzyme</keyword>
<keyword id="KW-0658">Purine biosynthesis</keyword>
<keyword id="KW-0808">Transferase</keyword>
<protein>
    <recommendedName>
        <fullName evidence="1">Bifunctional purine biosynthesis protein PurH</fullName>
    </recommendedName>
    <domain>
        <recommendedName>
            <fullName evidence="1">Phosphoribosylaminoimidazolecarboxamide formyltransferase</fullName>
            <ecNumber evidence="1">2.1.2.3</ecNumber>
        </recommendedName>
        <alternativeName>
            <fullName evidence="1">AICAR transformylase</fullName>
        </alternativeName>
    </domain>
    <domain>
        <recommendedName>
            <fullName evidence="1">IMP cyclohydrolase</fullName>
            <ecNumber evidence="1">3.5.4.10</ecNumber>
        </recommendedName>
        <alternativeName>
            <fullName evidence="1">ATIC</fullName>
        </alternativeName>
        <alternativeName>
            <fullName evidence="1">IMP synthase</fullName>
        </alternativeName>
        <alternativeName>
            <fullName evidence="1">Inosinicase</fullName>
        </alternativeName>
    </domain>
</protein>
<evidence type="ECO:0000255" key="1">
    <source>
        <dbReference type="HAMAP-Rule" id="MF_00139"/>
    </source>
</evidence>
<evidence type="ECO:0000255" key="2">
    <source>
        <dbReference type="PROSITE-ProRule" id="PRU01202"/>
    </source>
</evidence>
<sequence length="509" mass="54911">MKRALISVSDKNGIVPFAEKLVELGVEIISTGGTKAAFEQAGVPVTGIEEVTEFPEMLDGRVKTLHPAIHGGLLARRDTAEHMEAIAAHDIKPIDLVVVNLYPFQETIQKSGVTLEEAIENIDIGGPSMLRSAAKNYAAVTVVVDTADYDTVLTELEEHGATTFETRQRLAAKVFRHTAAYDALIAEYLTNITGETFPEKVTLTYNRKQVLRYGENPHQDAAFYTEPGTVENSISSAKQLHGKELSYNNIRDADAALKIASEFTEPVAVAVKHMNPCGVGVGENIEEAYLKAYEADETSIFGGIVALNKEVDAKTAEHMSKIFLEIIIAPSFSEEAFAILAKKKNIRLLTVPFAGSVKGFEKTSVNGGLLIQASDSVIEDTASYEVVTEKQPTEAEMKALIAQWKIVKHVKSNAIVVGSDKQTLGIGAGQMNRIGSALIALKQAGEKAKGAVLASDAFFPMDDTVEAAAKAGITAIIQPGGSIKDKESIEMANKYGISMVLTHVRHFKH</sequence>
<comment type="catalytic activity">
    <reaction evidence="1">
        <text>(6R)-10-formyltetrahydrofolate + 5-amino-1-(5-phospho-beta-D-ribosyl)imidazole-4-carboxamide = 5-formamido-1-(5-phospho-D-ribosyl)imidazole-4-carboxamide + (6S)-5,6,7,8-tetrahydrofolate</text>
        <dbReference type="Rhea" id="RHEA:22192"/>
        <dbReference type="ChEBI" id="CHEBI:57453"/>
        <dbReference type="ChEBI" id="CHEBI:58467"/>
        <dbReference type="ChEBI" id="CHEBI:58475"/>
        <dbReference type="ChEBI" id="CHEBI:195366"/>
        <dbReference type="EC" id="2.1.2.3"/>
    </reaction>
</comment>
<comment type="catalytic activity">
    <reaction evidence="1">
        <text>IMP + H2O = 5-formamido-1-(5-phospho-D-ribosyl)imidazole-4-carboxamide</text>
        <dbReference type="Rhea" id="RHEA:18445"/>
        <dbReference type="ChEBI" id="CHEBI:15377"/>
        <dbReference type="ChEBI" id="CHEBI:58053"/>
        <dbReference type="ChEBI" id="CHEBI:58467"/>
        <dbReference type="EC" id="3.5.4.10"/>
    </reaction>
</comment>
<comment type="pathway">
    <text evidence="1">Purine metabolism; IMP biosynthesis via de novo pathway; 5-formamido-1-(5-phospho-D-ribosyl)imidazole-4-carboxamide from 5-amino-1-(5-phospho-D-ribosyl)imidazole-4-carboxamide (10-formyl THF route): step 1/1.</text>
</comment>
<comment type="pathway">
    <text evidence="1">Purine metabolism; IMP biosynthesis via de novo pathway; IMP from 5-formamido-1-(5-phospho-D-ribosyl)imidazole-4-carboxamide: step 1/1.</text>
</comment>
<comment type="domain">
    <text evidence="1">The IMP cyclohydrolase activity resides in the N-terminal region.</text>
</comment>
<comment type="similarity">
    <text evidence="1">Belongs to the PurH family.</text>
</comment>